<dbReference type="EC" id="2.1.1.166" evidence="1"/>
<dbReference type="EMBL" id="CP000559">
    <property type="protein sequence ID" value="ABN07423.1"/>
    <property type="molecule type" value="Genomic_DNA"/>
</dbReference>
<dbReference type="RefSeq" id="WP_011833626.1">
    <property type="nucleotide sequence ID" value="NC_008942.1"/>
</dbReference>
<dbReference type="SMR" id="A2SSW7"/>
<dbReference type="STRING" id="410358.Mlab_1254"/>
<dbReference type="GeneID" id="4794704"/>
<dbReference type="KEGG" id="mla:Mlab_1254"/>
<dbReference type="eggNOG" id="arCOG00079">
    <property type="taxonomic scope" value="Archaea"/>
</dbReference>
<dbReference type="HOGENOM" id="CLU_009422_4_0_2"/>
<dbReference type="OrthoDB" id="26307at2157"/>
<dbReference type="Proteomes" id="UP000000365">
    <property type="component" value="Chromosome"/>
</dbReference>
<dbReference type="GO" id="GO:0005737">
    <property type="term" value="C:cytoplasm"/>
    <property type="evidence" value="ECO:0007669"/>
    <property type="project" value="UniProtKB-SubCell"/>
</dbReference>
<dbReference type="GO" id="GO:0008650">
    <property type="term" value="F:rRNA (uridine-2'-O-)-methyltransferase activity"/>
    <property type="evidence" value="ECO:0007669"/>
    <property type="project" value="UniProtKB-UniRule"/>
</dbReference>
<dbReference type="Gene3D" id="3.40.50.150">
    <property type="entry name" value="Vaccinia Virus protein VP39"/>
    <property type="match status" value="1"/>
</dbReference>
<dbReference type="HAMAP" id="MF_01547">
    <property type="entry name" value="RNA_methyltr_E"/>
    <property type="match status" value="1"/>
</dbReference>
<dbReference type="InterPro" id="IPR050082">
    <property type="entry name" value="RNA_methyltr_RlmE"/>
</dbReference>
<dbReference type="InterPro" id="IPR002877">
    <property type="entry name" value="RNA_MeTrfase_FtsJ_dom"/>
</dbReference>
<dbReference type="InterPro" id="IPR015507">
    <property type="entry name" value="rRNA-MeTfrase_E"/>
</dbReference>
<dbReference type="InterPro" id="IPR029063">
    <property type="entry name" value="SAM-dependent_MTases_sf"/>
</dbReference>
<dbReference type="PANTHER" id="PTHR10920:SF13">
    <property type="entry name" value="PRE-RRNA 2'-O-RIBOSE RNA METHYLTRANSFERASE FTSJ3"/>
    <property type="match status" value="1"/>
</dbReference>
<dbReference type="PANTHER" id="PTHR10920">
    <property type="entry name" value="RIBOSOMAL RNA METHYLTRANSFERASE"/>
    <property type="match status" value="1"/>
</dbReference>
<dbReference type="Pfam" id="PF01728">
    <property type="entry name" value="FtsJ"/>
    <property type="match status" value="1"/>
</dbReference>
<dbReference type="PIRSF" id="PIRSF005461">
    <property type="entry name" value="23S_rRNA_mtase"/>
    <property type="match status" value="1"/>
</dbReference>
<dbReference type="SUPFAM" id="SSF53335">
    <property type="entry name" value="S-adenosyl-L-methionine-dependent methyltransferases"/>
    <property type="match status" value="1"/>
</dbReference>
<sequence>MGSQWTKDNVYRKAMRDGYRARSAYKLIDINERFNVIRQTDNVVDLGAAPGSWLQVLKTMTEGQLCGVDLNPIIPLENVITITGDFTDPAIQAKIREAMPLVNVVVCDASPHLSGAKAYDQARVMGLNEEALNFASNLLKQGGNLVMKSFQGSDFNELLALVKEKFYSVRVIRSTATRRGSTECYIVAKNFIGDADDDRKKRE</sequence>
<comment type="function">
    <text evidence="1">Specifically methylates the uridine in position 2552 of 23S rRNA at the 2'-O position of the ribose in the fully assembled 50S ribosomal subunit.</text>
</comment>
<comment type="catalytic activity">
    <reaction evidence="1">
        <text>uridine(2552) in 23S rRNA + S-adenosyl-L-methionine = 2'-O-methyluridine(2552) in 23S rRNA + S-adenosyl-L-homocysteine + H(+)</text>
        <dbReference type="Rhea" id="RHEA:42720"/>
        <dbReference type="Rhea" id="RHEA-COMP:10202"/>
        <dbReference type="Rhea" id="RHEA-COMP:10203"/>
        <dbReference type="ChEBI" id="CHEBI:15378"/>
        <dbReference type="ChEBI" id="CHEBI:57856"/>
        <dbReference type="ChEBI" id="CHEBI:59789"/>
        <dbReference type="ChEBI" id="CHEBI:65315"/>
        <dbReference type="ChEBI" id="CHEBI:74478"/>
        <dbReference type="EC" id="2.1.1.166"/>
    </reaction>
</comment>
<comment type="subcellular location">
    <subcellularLocation>
        <location evidence="1">Cytoplasm</location>
    </subcellularLocation>
</comment>
<comment type="similarity">
    <text evidence="1">Belongs to the class I-like SAM-binding methyltransferase superfamily. RNA methyltransferase RlmE family.</text>
</comment>
<name>RLME_METLZ</name>
<organism>
    <name type="scientific">Methanocorpusculum labreanum (strain ATCC 43576 / DSM 4855 / Z)</name>
    <dbReference type="NCBI Taxonomy" id="410358"/>
    <lineage>
        <taxon>Archaea</taxon>
        <taxon>Methanobacteriati</taxon>
        <taxon>Methanobacteriota</taxon>
        <taxon>Stenosarchaea group</taxon>
        <taxon>Methanomicrobia</taxon>
        <taxon>Methanomicrobiales</taxon>
        <taxon>Methanocorpusculaceae</taxon>
        <taxon>Methanocorpusculum</taxon>
    </lineage>
</organism>
<proteinExistence type="inferred from homology"/>
<gene>
    <name evidence="1" type="primary">rlmE</name>
    <name evidence="1" type="synonym">rrmJ</name>
    <name type="ordered locus">Mlab_1254</name>
</gene>
<feature type="chain" id="PRO_0000300604" description="Ribosomal RNA large subunit methyltransferase E">
    <location>
        <begin position="1"/>
        <end position="203"/>
    </location>
</feature>
<feature type="active site" description="Proton acceptor" evidence="1">
    <location>
        <position position="148"/>
    </location>
</feature>
<feature type="binding site" evidence="1">
    <location>
        <position position="51"/>
    </location>
    <ligand>
        <name>S-adenosyl-L-methionine</name>
        <dbReference type="ChEBI" id="CHEBI:59789"/>
    </ligand>
</feature>
<feature type="binding site" evidence="1">
    <location>
        <position position="53"/>
    </location>
    <ligand>
        <name>S-adenosyl-L-methionine</name>
        <dbReference type="ChEBI" id="CHEBI:59789"/>
    </ligand>
</feature>
<feature type="binding site" evidence="1">
    <location>
        <position position="69"/>
    </location>
    <ligand>
        <name>S-adenosyl-L-methionine</name>
        <dbReference type="ChEBI" id="CHEBI:59789"/>
    </ligand>
</feature>
<feature type="binding site" evidence="1">
    <location>
        <position position="85"/>
    </location>
    <ligand>
        <name>S-adenosyl-L-methionine</name>
        <dbReference type="ChEBI" id="CHEBI:59789"/>
    </ligand>
</feature>
<feature type="binding site" evidence="1">
    <location>
        <position position="108"/>
    </location>
    <ligand>
        <name>S-adenosyl-L-methionine</name>
        <dbReference type="ChEBI" id="CHEBI:59789"/>
    </ligand>
</feature>
<keyword id="KW-0963">Cytoplasm</keyword>
<keyword id="KW-0489">Methyltransferase</keyword>
<keyword id="KW-1185">Reference proteome</keyword>
<keyword id="KW-0698">rRNA processing</keyword>
<keyword id="KW-0949">S-adenosyl-L-methionine</keyword>
<keyword id="KW-0808">Transferase</keyword>
<evidence type="ECO:0000255" key="1">
    <source>
        <dbReference type="HAMAP-Rule" id="MF_01547"/>
    </source>
</evidence>
<reference key="1">
    <citation type="journal article" date="2009" name="Stand. Genomic Sci.">
        <title>Complete genome sequence of Methanocorpusculum labreanum type strain Z.</title>
        <authorList>
            <person name="Anderson I.J."/>
            <person name="Sieprawska-Lupa M."/>
            <person name="Goltsman E."/>
            <person name="Lapidus A."/>
            <person name="Copeland A."/>
            <person name="Glavina Del Rio T."/>
            <person name="Tice H."/>
            <person name="Dalin E."/>
            <person name="Barry K."/>
            <person name="Pitluck S."/>
            <person name="Hauser L."/>
            <person name="Land M."/>
            <person name="Lucas S."/>
            <person name="Richardson P."/>
            <person name="Whitman W.B."/>
            <person name="Kyrpides N.C."/>
        </authorList>
    </citation>
    <scope>NUCLEOTIDE SEQUENCE [LARGE SCALE GENOMIC DNA]</scope>
    <source>
        <strain>ATCC 43576 / DSM 4855 / Z</strain>
    </source>
</reference>
<protein>
    <recommendedName>
        <fullName evidence="1">Ribosomal RNA large subunit methyltransferase E</fullName>
        <ecNumber evidence="1">2.1.1.166</ecNumber>
    </recommendedName>
    <alternativeName>
        <fullName evidence="1">23S rRNA Um2552 methyltransferase</fullName>
    </alternativeName>
    <alternativeName>
        <fullName evidence="1">rRNA (uridine-2'-O-)-methyltransferase</fullName>
    </alternativeName>
</protein>
<accession>A2SSW7</accession>